<sequence length="461" mass="51938">MQRTQIVDALAATAPQPVIRLCGWVRTRRDAKGFSFLEINDGSCLANIQAIVDEGIPAYANIGAVSTGAAVDITGELVESPGKGQKWEVRVQTLTLLGAADAETYPLQKKRHSDEFLRSIAHLRARTNKYGAAFRIRSEAAFAIHEFYRERGFFYVHTPILTGSDCEGAGEMFRVTTLPVEGSPTPASGNRYENDFFGKECNLTVSGQLEAETLALGLGKVYTFGPTFRAENSNTPRHAAEFWMIEPEVAFADLEEDMNLAEDMTRTVVRRILDRCAADLDLFNRFVDTTLVERLRQIADEPFARCSYTEAIELLLKSGKKFEYPVSFGLDLQTEHERYLAEEHFGKPVIVYNYPKEIKAFYMRLNDDGRTVAAMDVLVPRIGELIGGSQREERLDVLEARINEMGQNLEDYWWYLDLRRFGSVPHAGFGMGFERLLMLLTGITNIRDVIPFPRTPGNLEF</sequence>
<feature type="chain" id="PRO_1000051391" description="Asparagine--tRNA ligase">
    <location>
        <begin position="1"/>
        <end position="461"/>
    </location>
</feature>
<name>SYN_NITV4</name>
<dbReference type="EC" id="6.1.1.22" evidence="1"/>
<dbReference type="EMBL" id="CP000527">
    <property type="protein sequence ID" value="ABM27025.1"/>
    <property type="molecule type" value="Genomic_DNA"/>
</dbReference>
<dbReference type="RefSeq" id="WP_011791315.1">
    <property type="nucleotide sequence ID" value="NC_008751.1"/>
</dbReference>
<dbReference type="SMR" id="A1V9B8"/>
<dbReference type="KEGG" id="dvl:Dvul_0001"/>
<dbReference type="HOGENOM" id="CLU_004553_2_0_7"/>
<dbReference type="Proteomes" id="UP000009173">
    <property type="component" value="Chromosome"/>
</dbReference>
<dbReference type="GO" id="GO:0005737">
    <property type="term" value="C:cytoplasm"/>
    <property type="evidence" value="ECO:0007669"/>
    <property type="project" value="UniProtKB-SubCell"/>
</dbReference>
<dbReference type="GO" id="GO:0004816">
    <property type="term" value="F:asparagine-tRNA ligase activity"/>
    <property type="evidence" value="ECO:0007669"/>
    <property type="project" value="UniProtKB-UniRule"/>
</dbReference>
<dbReference type="GO" id="GO:0005524">
    <property type="term" value="F:ATP binding"/>
    <property type="evidence" value="ECO:0007669"/>
    <property type="project" value="UniProtKB-UniRule"/>
</dbReference>
<dbReference type="GO" id="GO:0003676">
    <property type="term" value="F:nucleic acid binding"/>
    <property type="evidence" value="ECO:0007669"/>
    <property type="project" value="InterPro"/>
</dbReference>
<dbReference type="GO" id="GO:0006421">
    <property type="term" value="P:asparaginyl-tRNA aminoacylation"/>
    <property type="evidence" value="ECO:0007669"/>
    <property type="project" value="UniProtKB-UniRule"/>
</dbReference>
<dbReference type="CDD" id="cd00776">
    <property type="entry name" value="AsxRS_core"/>
    <property type="match status" value="1"/>
</dbReference>
<dbReference type="CDD" id="cd04318">
    <property type="entry name" value="EcAsnRS_like_N"/>
    <property type="match status" value="1"/>
</dbReference>
<dbReference type="FunFam" id="3.30.930.10:FF:000016">
    <property type="entry name" value="Asparagine--tRNA ligase"/>
    <property type="match status" value="1"/>
</dbReference>
<dbReference type="Gene3D" id="3.30.930.10">
    <property type="entry name" value="Bira Bifunctional Protein, Domain 2"/>
    <property type="match status" value="1"/>
</dbReference>
<dbReference type="Gene3D" id="2.40.50.140">
    <property type="entry name" value="Nucleic acid-binding proteins"/>
    <property type="match status" value="1"/>
</dbReference>
<dbReference type="HAMAP" id="MF_00534">
    <property type="entry name" value="Asn_tRNA_synth"/>
    <property type="match status" value="1"/>
</dbReference>
<dbReference type="InterPro" id="IPR004364">
    <property type="entry name" value="Aa-tRNA-synt_II"/>
</dbReference>
<dbReference type="InterPro" id="IPR006195">
    <property type="entry name" value="aa-tRNA-synth_II"/>
</dbReference>
<dbReference type="InterPro" id="IPR045864">
    <property type="entry name" value="aa-tRNA-synth_II/BPL/LPL"/>
</dbReference>
<dbReference type="InterPro" id="IPR004522">
    <property type="entry name" value="Asn-tRNA-ligase"/>
</dbReference>
<dbReference type="InterPro" id="IPR002312">
    <property type="entry name" value="Asp/Asn-tRNA-synth_IIb"/>
</dbReference>
<dbReference type="InterPro" id="IPR012340">
    <property type="entry name" value="NA-bd_OB-fold"/>
</dbReference>
<dbReference type="InterPro" id="IPR004365">
    <property type="entry name" value="NA-bd_OB_tRNA"/>
</dbReference>
<dbReference type="NCBIfam" id="TIGR00457">
    <property type="entry name" value="asnS"/>
    <property type="match status" value="1"/>
</dbReference>
<dbReference type="NCBIfam" id="NF003037">
    <property type="entry name" value="PRK03932.1"/>
    <property type="match status" value="1"/>
</dbReference>
<dbReference type="PANTHER" id="PTHR22594:SF34">
    <property type="entry name" value="ASPARAGINE--TRNA LIGASE, MITOCHONDRIAL-RELATED"/>
    <property type="match status" value="1"/>
</dbReference>
<dbReference type="PANTHER" id="PTHR22594">
    <property type="entry name" value="ASPARTYL/LYSYL-TRNA SYNTHETASE"/>
    <property type="match status" value="1"/>
</dbReference>
<dbReference type="Pfam" id="PF00152">
    <property type="entry name" value="tRNA-synt_2"/>
    <property type="match status" value="1"/>
</dbReference>
<dbReference type="Pfam" id="PF01336">
    <property type="entry name" value="tRNA_anti-codon"/>
    <property type="match status" value="1"/>
</dbReference>
<dbReference type="PRINTS" id="PR01042">
    <property type="entry name" value="TRNASYNTHASP"/>
</dbReference>
<dbReference type="SUPFAM" id="SSF55681">
    <property type="entry name" value="Class II aaRS and biotin synthetases"/>
    <property type="match status" value="1"/>
</dbReference>
<dbReference type="SUPFAM" id="SSF50249">
    <property type="entry name" value="Nucleic acid-binding proteins"/>
    <property type="match status" value="1"/>
</dbReference>
<dbReference type="PROSITE" id="PS50862">
    <property type="entry name" value="AA_TRNA_LIGASE_II"/>
    <property type="match status" value="1"/>
</dbReference>
<evidence type="ECO:0000255" key="1">
    <source>
        <dbReference type="HAMAP-Rule" id="MF_00534"/>
    </source>
</evidence>
<keyword id="KW-0030">Aminoacyl-tRNA synthetase</keyword>
<keyword id="KW-0067">ATP-binding</keyword>
<keyword id="KW-0963">Cytoplasm</keyword>
<keyword id="KW-0436">Ligase</keyword>
<keyword id="KW-0547">Nucleotide-binding</keyword>
<keyword id="KW-0648">Protein biosynthesis</keyword>
<proteinExistence type="inferred from homology"/>
<gene>
    <name evidence="1" type="primary">asnS</name>
    <name type="ordered locus">Dvul_0001</name>
</gene>
<comment type="catalytic activity">
    <reaction evidence="1">
        <text>tRNA(Asn) + L-asparagine + ATP = L-asparaginyl-tRNA(Asn) + AMP + diphosphate + H(+)</text>
        <dbReference type="Rhea" id="RHEA:11180"/>
        <dbReference type="Rhea" id="RHEA-COMP:9659"/>
        <dbReference type="Rhea" id="RHEA-COMP:9674"/>
        <dbReference type="ChEBI" id="CHEBI:15378"/>
        <dbReference type="ChEBI" id="CHEBI:30616"/>
        <dbReference type="ChEBI" id="CHEBI:33019"/>
        <dbReference type="ChEBI" id="CHEBI:58048"/>
        <dbReference type="ChEBI" id="CHEBI:78442"/>
        <dbReference type="ChEBI" id="CHEBI:78515"/>
        <dbReference type="ChEBI" id="CHEBI:456215"/>
        <dbReference type="EC" id="6.1.1.22"/>
    </reaction>
</comment>
<comment type="subunit">
    <text evidence="1">Homodimer.</text>
</comment>
<comment type="subcellular location">
    <subcellularLocation>
        <location evidence="1">Cytoplasm</location>
    </subcellularLocation>
</comment>
<comment type="similarity">
    <text evidence="1">Belongs to the class-II aminoacyl-tRNA synthetase family.</text>
</comment>
<accession>A1V9B8</accession>
<protein>
    <recommendedName>
        <fullName evidence="1">Asparagine--tRNA ligase</fullName>
        <ecNumber evidence="1">6.1.1.22</ecNumber>
    </recommendedName>
    <alternativeName>
        <fullName evidence="1">Asparaginyl-tRNA synthetase</fullName>
        <shortName evidence="1">AsnRS</shortName>
    </alternativeName>
</protein>
<reference key="1">
    <citation type="journal article" date="2009" name="Environ. Microbiol.">
        <title>Contribution of mobile genetic elements to Desulfovibrio vulgaris genome plasticity.</title>
        <authorList>
            <person name="Walker C.B."/>
            <person name="Stolyar S."/>
            <person name="Chivian D."/>
            <person name="Pinel N."/>
            <person name="Gabster J.A."/>
            <person name="Dehal P.S."/>
            <person name="He Z."/>
            <person name="Yang Z.K."/>
            <person name="Yen H.C."/>
            <person name="Zhou J."/>
            <person name="Wall J.D."/>
            <person name="Hazen T.C."/>
            <person name="Arkin A.P."/>
            <person name="Stahl D.A."/>
        </authorList>
    </citation>
    <scope>NUCLEOTIDE SEQUENCE [LARGE SCALE GENOMIC DNA]</scope>
    <source>
        <strain>DP4</strain>
    </source>
</reference>
<organism>
    <name type="scientific">Nitratidesulfovibrio vulgaris (strain DP4)</name>
    <name type="common">Desulfovibrio vulgaris</name>
    <dbReference type="NCBI Taxonomy" id="391774"/>
    <lineage>
        <taxon>Bacteria</taxon>
        <taxon>Pseudomonadati</taxon>
        <taxon>Thermodesulfobacteriota</taxon>
        <taxon>Desulfovibrionia</taxon>
        <taxon>Desulfovibrionales</taxon>
        <taxon>Desulfovibrionaceae</taxon>
        <taxon>Nitratidesulfovibrio</taxon>
    </lineage>
</organism>